<accession>A0ALF6</accession>
<feature type="chain" id="PRO_0000376518" description="Probable cell division protein WhiA">
    <location>
        <begin position="1"/>
        <end position="323"/>
    </location>
</feature>
<feature type="DNA-binding region" description="H-T-H motif" evidence="1">
    <location>
        <begin position="275"/>
        <end position="309"/>
    </location>
</feature>
<name>WHIA_LISW6</name>
<proteinExistence type="inferred from homology"/>
<dbReference type="EMBL" id="AM263198">
    <property type="protein sequence ID" value="CAK21838.1"/>
    <property type="molecule type" value="Genomic_DNA"/>
</dbReference>
<dbReference type="RefSeq" id="WP_011703156.1">
    <property type="nucleotide sequence ID" value="NC_008555.1"/>
</dbReference>
<dbReference type="SMR" id="A0ALF6"/>
<dbReference type="STRING" id="386043.lwe2420"/>
<dbReference type="GeneID" id="61190339"/>
<dbReference type="KEGG" id="lwe:lwe2420"/>
<dbReference type="eggNOG" id="COG1481">
    <property type="taxonomic scope" value="Bacteria"/>
</dbReference>
<dbReference type="HOGENOM" id="CLU_053282_0_0_9"/>
<dbReference type="OrthoDB" id="401278at2"/>
<dbReference type="Proteomes" id="UP000000779">
    <property type="component" value="Chromosome"/>
</dbReference>
<dbReference type="GO" id="GO:0003677">
    <property type="term" value="F:DNA binding"/>
    <property type="evidence" value="ECO:0007669"/>
    <property type="project" value="UniProtKB-UniRule"/>
</dbReference>
<dbReference type="GO" id="GO:0051301">
    <property type="term" value="P:cell division"/>
    <property type="evidence" value="ECO:0007669"/>
    <property type="project" value="UniProtKB-UniRule"/>
</dbReference>
<dbReference type="GO" id="GO:0043937">
    <property type="term" value="P:regulation of sporulation"/>
    <property type="evidence" value="ECO:0007669"/>
    <property type="project" value="InterPro"/>
</dbReference>
<dbReference type="FunFam" id="3.10.28.10:FF:000002">
    <property type="entry name" value="Probable cell division protein WhiA"/>
    <property type="match status" value="1"/>
</dbReference>
<dbReference type="Gene3D" id="3.10.28.10">
    <property type="entry name" value="Homing endonucleases"/>
    <property type="match status" value="1"/>
</dbReference>
<dbReference type="HAMAP" id="MF_01420">
    <property type="entry name" value="HTH_type_WhiA"/>
    <property type="match status" value="1"/>
</dbReference>
<dbReference type="InterPro" id="IPR027434">
    <property type="entry name" value="Homing_endonucl"/>
</dbReference>
<dbReference type="InterPro" id="IPR018478">
    <property type="entry name" value="Sporu_reg_WhiA_N_dom"/>
</dbReference>
<dbReference type="InterPro" id="IPR003802">
    <property type="entry name" value="Sporulation_regulator_WhiA"/>
</dbReference>
<dbReference type="InterPro" id="IPR023054">
    <property type="entry name" value="Sporulation_regulator_WhiA_C"/>
</dbReference>
<dbReference type="InterPro" id="IPR039518">
    <property type="entry name" value="WhiA_LAGLIDADG_dom"/>
</dbReference>
<dbReference type="NCBIfam" id="TIGR00647">
    <property type="entry name" value="DNA_bind_WhiA"/>
    <property type="match status" value="1"/>
</dbReference>
<dbReference type="PANTHER" id="PTHR37307">
    <property type="entry name" value="CELL DIVISION PROTEIN WHIA-RELATED"/>
    <property type="match status" value="1"/>
</dbReference>
<dbReference type="PANTHER" id="PTHR37307:SF1">
    <property type="entry name" value="CELL DIVISION PROTEIN WHIA-RELATED"/>
    <property type="match status" value="1"/>
</dbReference>
<dbReference type="Pfam" id="PF02650">
    <property type="entry name" value="HTH_WhiA"/>
    <property type="match status" value="1"/>
</dbReference>
<dbReference type="Pfam" id="PF14527">
    <property type="entry name" value="LAGLIDADG_WhiA"/>
    <property type="match status" value="1"/>
</dbReference>
<dbReference type="Pfam" id="PF10298">
    <property type="entry name" value="WhiA_N"/>
    <property type="match status" value="1"/>
</dbReference>
<dbReference type="SUPFAM" id="SSF55608">
    <property type="entry name" value="Homing endonucleases"/>
    <property type="match status" value="1"/>
</dbReference>
<comment type="function">
    <text evidence="1">Involved in cell division and chromosome segregation.</text>
</comment>
<comment type="similarity">
    <text evidence="1">Belongs to the WhiA family.</text>
</comment>
<keyword id="KW-0131">Cell cycle</keyword>
<keyword id="KW-0132">Cell division</keyword>
<keyword id="KW-0238">DNA-binding</keyword>
<organism>
    <name type="scientific">Listeria welshimeri serovar 6b (strain ATCC 35897 / DSM 20650 / CCUG 15529 / CIP 8149 / NCTC 11857 / SLCC 5334 / V8)</name>
    <dbReference type="NCBI Taxonomy" id="386043"/>
    <lineage>
        <taxon>Bacteria</taxon>
        <taxon>Bacillati</taxon>
        <taxon>Bacillota</taxon>
        <taxon>Bacilli</taxon>
        <taxon>Bacillales</taxon>
        <taxon>Listeriaceae</taxon>
        <taxon>Listeria</taxon>
    </lineage>
</organism>
<protein>
    <recommendedName>
        <fullName evidence="1">Probable cell division protein WhiA</fullName>
    </recommendedName>
</protein>
<sequence>MSFASETKKELTHMDVSDSDAKVELAAFIRMNGAISFSNQLVIMDVQTENAAIARRMYQLLKDLYEVPIELLVRRKMKLKKNNVYIVRLKSGTRGILEDLRILEPPMTFTKSIDRGFVKKRSAKRAYLRGAFLASGSVNNPETSSYHLEIFSVYEEHNEAICALMNQFDLNARTLERKNGFITYLKEAEKITEFLSIIGATSALLHFEDVRIMRDMRNSVNRLVNCETANLNKTINAAVRQIDNIKYIQSTVGLEALPERLREIAALRIANEDVTLKELGEMLTTGQVSKSGINHRLRKLDQIAERLRSGETPSQVGLKVSNS</sequence>
<evidence type="ECO:0000255" key="1">
    <source>
        <dbReference type="HAMAP-Rule" id="MF_01420"/>
    </source>
</evidence>
<gene>
    <name evidence="1" type="primary">whiA</name>
    <name type="ordered locus">lwe2420</name>
</gene>
<reference key="1">
    <citation type="journal article" date="2006" name="J. Bacteriol.">
        <title>Whole-genome sequence of Listeria welshimeri reveals common steps in genome reduction with Listeria innocua as compared to Listeria monocytogenes.</title>
        <authorList>
            <person name="Hain T."/>
            <person name="Steinweg C."/>
            <person name="Kuenne C.T."/>
            <person name="Billion A."/>
            <person name="Ghai R."/>
            <person name="Chatterjee S.S."/>
            <person name="Domann E."/>
            <person name="Kaerst U."/>
            <person name="Goesmann A."/>
            <person name="Bekel T."/>
            <person name="Bartels D."/>
            <person name="Kaiser O."/>
            <person name="Meyer F."/>
            <person name="Puehler A."/>
            <person name="Weisshaar B."/>
            <person name="Wehland J."/>
            <person name="Liang C."/>
            <person name="Dandekar T."/>
            <person name="Lampidis R."/>
            <person name="Kreft J."/>
            <person name="Goebel W."/>
            <person name="Chakraborty T."/>
        </authorList>
    </citation>
    <scope>NUCLEOTIDE SEQUENCE [LARGE SCALE GENOMIC DNA]</scope>
    <source>
        <strain>ATCC 35897 / DSM 20650 / CCUG 15529 / CIP 8149 / NCTC 11857 / SLCC 5334 / V8</strain>
    </source>
</reference>